<comment type="function">
    <text evidence="1">Catalyzes the decarboxylative condensation of pimeloyl-[acyl-carrier protein] and L-alanine to produce 8-amino-7-oxononanoate (AON), [acyl-carrier protein], and carbon dioxide.</text>
</comment>
<comment type="catalytic activity">
    <reaction>
        <text>6-carboxyhexanoyl-[ACP] + L-alanine + H(+) = (8S)-8-amino-7-oxononanoate + holo-[ACP] + CO2</text>
        <dbReference type="Rhea" id="RHEA:42288"/>
        <dbReference type="Rhea" id="RHEA-COMP:9685"/>
        <dbReference type="Rhea" id="RHEA-COMP:9955"/>
        <dbReference type="ChEBI" id="CHEBI:15378"/>
        <dbReference type="ChEBI" id="CHEBI:16526"/>
        <dbReference type="ChEBI" id="CHEBI:57972"/>
        <dbReference type="ChEBI" id="CHEBI:64479"/>
        <dbReference type="ChEBI" id="CHEBI:78846"/>
        <dbReference type="ChEBI" id="CHEBI:149468"/>
        <dbReference type="EC" id="2.3.1.47"/>
    </reaction>
</comment>
<comment type="cofactor">
    <cofactor evidence="1">
        <name>pyridoxal 5'-phosphate</name>
        <dbReference type="ChEBI" id="CHEBI:597326"/>
    </cofactor>
</comment>
<comment type="pathway">
    <text>Cofactor biosynthesis; biotin biosynthesis.</text>
</comment>
<comment type="subunit">
    <text evidence="1">Homodimer.</text>
</comment>
<comment type="similarity">
    <text evidence="2">Belongs to the class-II pyridoxal-phosphate-dependent aminotransferase family. BioF subfamily.</text>
</comment>
<reference key="1">
    <citation type="journal article" date="2009" name="J. Bacteriol.">
        <title>Complete genome sequence of the extremophilic Bacillus cereus strain Q1 with industrial applications.</title>
        <authorList>
            <person name="Xiong Z."/>
            <person name="Jiang Y."/>
            <person name="Qi D."/>
            <person name="Lu H."/>
            <person name="Yang F."/>
            <person name="Yang J."/>
            <person name="Chen L."/>
            <person name="Sun L."/>
            <person name="Xu X."/>
            <person name="Xue Y."/>
            <person name="Zhu Y."/>
            <person name="Jin Q."/>
        </authorList>
    </citation>
    <scope>NUCLEOTIDE SEQUENCE [LARGE SCALE GENOMIC DNA]</scope>
    <source>
        <strain>Q1</strain>
    </source>
</reference>
<keyword id="KW-0093">Biotin biosynthesis</keyword>
<keyword id="KW-0663">Pyridoxal phosphate</keyword>
<keyword id="KW-0808">Transferase</keyword>
<name>BIOF_BACCQ</name>
<dbReference type="EC" id="2.3.1.47"/>
<dbReference type="EMBL" id="CP000227">
    <property type="protein sequence ID" value="ACM14335.1"/>
    <property type="molecule type" value="Genomic_DNA"/>
</dbReference>
<dbReference type="SMR" id="B9IWY0"/>
<dbReference type="KEGG" id="bcq:BCQ_3907"/>
<dbReference type="HOGENOM" id="CLU_015846_11_2_9"/>
<dbReference type="UniPathway" id="UPA00078"/>
<dbReference type="Proteomes" id="UP000000441">
    <property type="component" value="Chromosome"/>
</dbReference>
<dbReference type="GO" id="GO:0008710">
    <property type="term" value="F:8-amino-7-oxononanoate synthase activity"/>
    <property type="evidence" value="ECO:0007669"/>
    <property type="project" value="UniProtKB-EC"/>
</dbReference>
<dbReference type="GO" id="GO:0030170">
    <property type="term" value="F:pyridoxal phosphate binding"/>
    <property type="evidence" value="ECO:0007669"/>
    <property type="project" value="InterPro"/>
</dbReference>
<dbReference type="GO" id="GO:0009102">
    <property type="term" value="P:biotin biosynthetic process"/>
    <property type="evidence" value="ECO:0007669"/>
    <property type="project" value="UniProtKB-UniPathway"/>
</dbReference>
<dbReference type="CDD" id="cd06454">
    <property type="entry name" value="KBL_like"/>
    <property type="match status" value="1"/>
</dbReference>
<dbReference type="FunFam" id="3.40.640.10:FF:000006">
    <property type="entry name" value="5-aminolevulinate synthase, mitochondrial"/>
    <property type="match status" value="1"/>
</dbReference>
<dbReference type="Gene3D" id="3.90.1150.10">
    <property type="entry name" value="Aspartate Aminotransferase, domain 1"/>
    <property type="match status" value="1"/>
</dbReference>
<dbReference type="Gene3D" id="3.40.640.10">
    <property type="entry name" value="Type I PLP-dependent aspartate aminotransferase-like (Major domain)"/>
    <property type="match status" value="1"/>
</dbReference>
<dbReference type="InterPro" id="IPR001917">
    <property type="entry name" value="Aminotrans_II_pyridoxalP_BS"/>
</dbReference>
<dbReference type="InterPro" id="IPR004839">
    <property type="entry name" value="Aminotransferase_I/II_large"/>
</dbReference>
<dbReference type="InterPro" id="IPR050087">
    <property type="entry name" value="AON_synthase_class-II"/>
</dbReference>
<dbReference type="InterPro" id="IPR004723">
    <property type="entry name" value="AONS_Archaea/Proteobacteria"/>
</dbReference>
<dbReference type="InterPro" id="IPR015424">
    <property type="entry name" value="PyrdxlP-dep_Trfase"/>
</dbReference>
<dbReference type="InterPro" id="IPR015421">
    <property type="entry name" value="PyrdxlP-dep_Trfase_major"/>
</dbReference>
<dbReference type="InterPro" id="IPR015422">
    <property type="entry name" value="PyrdxlP-dep_Trfase_small"/>
</dbReference>
<dbReference type="NCBIfam" id="TIGR00858">
    <property type="entry name" value="bioF"/>
    <property type="match status" value="1"/>
</dbReference>
<dbReference type="PANTHER" id="PTHR13693:SF100">
    <property type="entry name" value="8-AMINO-7-OXONONANOATE SYNTHASE"/>
    <property type="match status" value="1"/>
</dbReference>
<dbReference type="PANTHER" id="PTHR13693">
    <property type="entry name" value="CLASS II AMINOTRANSFERASE/8-AMINO-7-OXONONANOATE SYNTHASE"/>
    <property type="match status" value="1"/>
</dbReference>
<dbReference type="Pfam" id="PF00155">
    <property type="entry name" value="Aminotran_1_2"/>
    <property type="match status" value="1"/>
</dbReference>
<dbReference type="SUPFAM" id="SSF53383">
    <property type="entry name" value="PLP-dependent transferases"/>
    <property type="match status" value="1"/>
</dbReference>
<dbReference type="PROSITE" id="PS00599">
    <property type="entry name" value="AA_TRANSFER_CLASS_2"/>
    <property type="match status" value="1"/>
</dbReference>
<accession>B9IWY0</accession>
<gene>
    <name type="primary">bioF</name>
    <name type="ordered locus">BCQ_3907</name>
</gene>
<protein>
    <recommendedName>
        <fullName>Putative 8-amino-7-oxononanoate synthase</fullName>
        <shortName>AONS</shortName>
        <ecNumber>2.3.1.47</ecNumber>
    </recommendedName>
    <alternativeName>
        <fullName>7-keto-8-amino-pelargonic acid synthase</fullName>
        <shortName>7-KAP synthase</shortName>
    </alternativeName>
    <alternativeName>
        <fullName>8-amino-7-ketopelargonate synthase</fullName>
    </alternativeName>
</protein>
<evidence type="ECO:0000250" key="1"/>
<evidence type="ECO:0000305" key="2"/>
<proteinExistence type="inferred from homology"/>
<sequence>MNQTWRTHLQSKLQQLHEREQYRNLHVTEQAEETWLIRDEKRMLNLASNNYLGLAGDERLKEAAIACTRKYGTGATASRLVVGNYSLYEEVERSICDWKGTEKALVVNSGYTANIGVISSLVSRHDIVFSDKLNHASIVDGIILSGAEHKRYGHNDLDHLEKLLKTASPEKRKLIVTDTVFSMDGDTAYLRELVELKEKYGAILIVDEAHASGIYGIGGAGLSHIEDLAQKIDIHMGTFSKALGCYGAYLTGDAIYIEYLHNMMRSFIFTTALPPGTLGAVQKAIEIVQEDHKRRENLIANGEYFRSKLRDAGFNIGNSSTHIVPIVVGSNENALRFSKRLQEAGIAAIAIRPPTVPINSSRIRFAVTSQHTIADLKWAIDRIIHIAKEEELFV</sequence>
<feature type="chain" id="PRO_0000380913" description="Putative 8-amino-7-oxononanoate synthase">
    <location>
        <begin position="1"/>
        <end position="394"/>
    </location>
</feature>
<feature type="binding site" evidence="1">
    <location>
        <position position="23"/>
    </location>
    <ligand>
        <name>substrate</name>
    </ligand>
</feature>
<feature type="binding site" evidence="1">
    <location>
        <begin position="110"/>
        <end position="111"/>
    </location>
    <ligand>
        <name>pyridoxal 5'-phosphate</name>
        <dbReference type="ChEBI" id="CHEBI:597326"/>
    </ligand>
</feature>
<feature type="binding site" evidence="1">
    <location>
        <position position="135"/>
    </location>
    <ligand>
        <name>substrate</name>
    </ligand>
</feature>
<feature type="binding site" evidence="1">
    <location>
        <position position="182"/>
    </location>
    <ligand>
        <name>pyridoxal 5'-phosphate</name>
        <dbReference type="ChEBI" id="CHEBI:597326"/>
    </ligand>
</feature>
<feature type="binding site" evidence="1">
    <location>
        <begin position="207"/>
        <end position="210"/>
    </location>
    <ligand>
        <name>pyridoxal 5'-phosphate</name>
        <dbReference type="ChEBI" id="CHEBI:597326"/>
    </ligand>
</feature>
<feature type="binding site" evidence="1">
    <location>
        <begin position="238"/>
        <end position="241"/>
    </location>
    <ligand>
        <name>pyridoxal 5'-phosphate</name>
        <dbReference type="ChEBI" id="CHEBI:597326"/>
    </ligand>
</feature>
<feature type="binding site" evidence="1">
    <location>
        <position position="355"/>
    </location>
    <ligand>
        <name>substrate</name>
    </ligand>
</feature>
<feature type="modified residue" description="N6-(pyridoxal phosphate)lysine" evidence="1">
    <location>
        <position position="241"/>
    </location>
</feature>
<organism>
    <name type="scientific">Bacillus cereus (strain Q1)</name>
    <dbReference type="NCBI Taxonomy" id="361100"/>
    <lineage>
        <taxon>Bacteria</taxon>
        <taxon>Bacillati</taxon>
        <taxon>Bacillota</taxon>
        <taxon>Bacilli</taxon>
        <taxon>Bacillales</taxon>
        <taxon>Bacillaceae</taxon>
        <taxon>Bacillus</taxon>
        <taxon>Bacillus cereus group</taxon>
    </lineage>
</organism>